<gene>
    <name evidence="1" type="primary">HSPD1</name>
    <name evidence="1" type="synonym">HSP60</name>
    <name type="ORF">RCJMB04_7g5</name>
</gene>
<comment type="function">
    <text evidence="1">Chaperonin implicated in mitochondrial protein import and macromolecular assembly. Together with Hsp10, facilitates the correct folding of imported proteins. May also prevent misfolding and promote the refolding and proper assembly of unfolded polypeptides generated under stress conditions in the mitochondrial matrix. The functional units of these chaperonins consist of heptameric rings of the large subunit Hsp60, which function as a back-to-back double ring. In a cyclic reaction, Hsp60 ring complexes bind one unfolded substrate protein per ring, followed by the binding of ATP and association with 2 heptameric rings of the co-chaperonin Hsp10. This leads to sequestration of the substrate protein in the inner cavity of Hsp60 where, for a certain period of time, it can fold undisturbed by other cell components. Synchronous hydrolysis of ATP in all Hsp60 subunits results in the dissociation of the chaperonin rings and the release of ADP and the folded substrate protein.</text>
</comment>
<comment type="catalytic activity">
    <reaction evidence="1">
        <text>ATP + H2O + a folded polypeptide = ADP + phosphate + an unfolded polypeptide.</text>
        <dbReference type="EC" id="5.6.1.7"/>
    </reaction>
</comment>
<comment type="interaction">
    <interactant intactId="EBI-1635874">
        <id>Q5ZL72</id>
    </interactant>
    <interactant intactId="EBI-1635766">
        <id>Q8AYS8</id>
        <label>KCNMA1</label>
    </interactant>
    <organismsDiffer>false</organismsDiffer>
    <experiments>3</experiments>
</comment>
<comment type="subcellular location">
    <subcellularLocation>
        <location evidence="1">Mitochondrion matrix</location>
    </subcellularLocation>
</comment>
<comment type="mass spectrometry"/>
<comment type="similarity">
    <text evidence="2">Belongs to the chaperonin (HSP60) family.</text>
</comment>
<protein>
    <recommendedName>
        <fullName>60 kDa heat shock protein, mitochondrial</fullName>
        <ecNumber evidence="1">5.6.1.7</ecNumber>
    </recommendedName>
    <alternativeName>
        <fullName>60 kDa chaperonin</fullName>
    </alternativeName>
    <alternativeName>
        <fullName>Chaperonin 60</fullName>
        <shortName>CPN60</shortName>
    </alternativeName>
    <alternativeName>
        <fullName>Heat shock protein 60</fullName>
        <shortName>HSP-60</shortName>
        <shortName>Hsp60</shortName>
    </alternativeName>
</protein>
<dbReference type="EC" id="5.6.1.7" evidence="1"/>
<dbReference type="EMBL" id="AJ719862">
    <property type="protein sequence ID" value="CAG31521.1"/>
    <property type="molecule type" value="mRNA"/>
</dbReference>
<dbReference type="RefSeq" id="NP_001012934.1">
    <property type="nucleotide sequence ID" value="NM_001012916.3"/>
</dbReference>
<dbReference type="SMR" id="Q5ZL72"/>
<dbReference type="BioGRID" id="684495">
    <property type="interactions" value="5"/>
</dbReference>
<dbReference type="FunCoup" id="Q5ZL72">
    <property type="interactions" value="2417"/>
</dbReference>
<dbReference type="IntAct" id="Q5ZL72">
    <property type="interactions" value="1"/>
</dbReference>
<dbReference type="STRING" id="9031.ENSGALP00000013122"/>
<dbReference type="GlyGen" id="Q5ZL72">
    <property type="glycosylation" value="1 site"/>
</dbReference>
<dbReference type="PaxDb" id="9031-ENSGALP00000013122"/>
<dbReference type="Ensembl" id="ENSGALT00010036270.1">
    <property type="protein sequence ID" value="ENSGALP00010021089.1"/>
    <property type="gene ID" value="ENSGALG00010015069.1"/>
</dbReference>
<dbReference type="GeneID" id="424059"/>
<dbReference type="KEGG" id="gga:424059"/>
<dbReference type="CTD" id="3329"/>
<dbReference type="VEuPathDB" id="HostDB:geneid_424059"/>
<dbReference type="eggNOG" id="KOG0356">
    <property type="taxonomic scope" value="Eukaryota"/>
</dbReference>
<dbReference type="GeneTree" id="ENSGT00390000005727"/>
<dbReference type="HOGENOM" id="CLU_016503_3_0_1"/>
<dbReference type="InParanoid" id="Q5ZL72"/>
<dbReference type="OMA" id="TDTDKME"/>
<dbReference type="OrthoDB" id="1733909at2759"/>
<dbReference type="PhylomeDB" id="Q5ZL72"/>
<dbReference type="TreeFam" id="TF300475"/>
<dbReference type="Reactome" id="R-GGA-1268020">
    <property type="pathway name" value="Mitochondrial protein import"/>
</dbReference>
<dbReference type="Reactome" id="R-GGA-9837999">
    <property type="pathway name" value="Mitochondrial protein degradation"/>
</dbReference>
<dbReference type="PRO" id="PR:Q5ZL72"/>
<dbReference type="Proteomes" id="UP000000539">
    <property type="component" value="Chromosome 7"/>
</dbReference>
<dbReference type="Bgee" id="ENSGALG00000008094">
    <property type="expression patterns" value="Expressed in kidney and 12 other cell types or tissues"/>
</dbReference>
<dbReference type="GO" id="GO:0009986">
    <property type="term" value="C:cell surface"/>
    <property type="evidence" value="ECO:0007669"/>
    <property type="project" value="Ensembl"/>
</dbReference>
<dbReference type="GO" id="GO:0005905">
    <property type="term" value="C:clathrin-coated pit"/>
    <property type="evidence" value="ECO:0007669"/>
    <property type="project" value="Ensembl"/>
</dbReference>
<dbReference type="GO" id="GO:0030135">
    <property type="term" value="C:coated vesicle"/>
    <property type="evidence" value="ECO:0007669"/>
    <property type="project" value="Ensembl"/>
</dbReference>
<dbReference type="GO" id="GO:0005737">
    <property type="term" value="C:cytoplasm"/>
    <property type="evidence" value="ECO:0000250"/>
    <property type="project" value="UniProtKB"/>
</dbReference>
<dbReference type="GO" id="GO:0005829">
    <property type="term" value="C:cytosol"/>
    <property type="evidence" value="ECO:0007669"/>
    <property type="project" value="Ensembl"/>
</dbReference>
<dbReference type="GO" id="GO:0005769">
    <property type="term" value="C:early endosome"/>
    <property type="evidence" value="ECO:0007669"/>
    <property type="project" value="Ensembl"/>
</dbReference>
<dbReference type="GO" id="GO:0070062">
    <property type="term" value="C:extracellular exosome"/>
    <property type="evidence" value="ECO:0007669"/>
    <property type="project" value="Ensembl"/>
</dbReference>
<dbReference type="GO" id="GO:0046696">
    <property type="term" value="C:lipopolysaccharide receptor complex"/>
    <property type="evidence" value="ECO:0007669"/>
    <property type="project" value="Ensembl"/>
</dbReference>
<dbReference type="GO" id="GO:0140494">
    <property type="term" value="C:migrasome"/>
    <property type="evidence" value="ECO:0007669"/>
    <property type="project" value="Ensembl"/>
</dbReference>
<dbReference type="GO" id="GO:0005743">
    <property type="term" value="C:mitochondrial inner membrane"/>
    <property type="evidence" value="ECO:0000318"/>
    <property type="project" value="GO_Central"/>
</dbReference>
<dbReference type="GO" id="GO:0005759">
    <property type="term" value="C:mitochondrial matrix"/>
    <property type="evidence" value="ECO:0000318"/>
    <property type="project" value="GO_Central"/>
</dbReference>
<dbReference type="GO" id="GO:0043025">
    <property type="term" value="C:neuronal cell body"/>
    <property type="evidence" value="ECO:0000314"/>
    <property type="project" value="AgBase"/>
</dbReference>
<dbReference type="GO" id="GO:0030141">
    <property type="term" value="C:secretory granule"/>
    <property type="evidence" value="ECO:0007669"/>
    <property type="project" value="Ensembl"/>
</dbReference>
<dbReference type="GO" id="GO:0097225">
    <property type="term" value="C:sperm midpiece"/>
    <property type="evidence" value="ECO:0007669"/>
    <property type="project" value="Ensembl"/>
</dbReference>
<dbReference type="GO" id="GO:0097524">
    <property type="term" value="C:sperm plasma membrane"/>
    <property type="evidence" value="ECO:0007669"/>
    <property type="project" value="Ensembl"/>
</dbReference>
<dbReference type="GO" id="GO:0034186">
    <property type="term" value="F:apolipoprotein A-I binding"/>
    <property type="evidence" value="ECO:0007669"/>
    <property type="project" value="Ensembl"/>
</dbReference>
<dbReference type="GO" id="GO:0005524">
    <property type="term" value="F:ATP binding"/>
    <property type="evidence" value="ECO:0007669"/>
    <property type="project" value="UniProtKB-KW"/>
</dbReference>
<dbReference type="GO" id="GO:0140662">
    <property type="term" value="F:ATP-dependent protein folding chaperone"/>
    <property type="evidence" value="ECO:0007669"/>
    <property type="project" value="InterPro"/>
</dbReference>
<dbReference type="GO" id="GO:0140608">
    <property type="term" value="F:cysteine-type endopeptidase activator activity"/>
    <property type="evidence" value="ECO:0007669"/>
    <property type="project" value="Ensembl"/>
</dbReference>
<dbReference type="GO" id="GO:0003725">
    <property type="term" value="F:double-stranded RNA binding"/>
    <property type="evidence" value="ECO:0007669"/>
    <property type="project" value="Ensembl"/>
</dbReference>
<dbReference type="GO" id="GO:0008035">
    <property type="term" value="F:high-density lipoprotein particle binding"/>
    <property type="evidence" value="ECO:0007669"/>
    <property type="project" value="Ensembl"/>
</dbReference>
<dbReference type="GO" id="GO:0016853">
    <property type="term" value="F:isomerase activity"/>
    <property type="evidence" value="ECO:0007669"/>
    <property type="project" value="UniProtKB-KW"/>
</dbReference>
<dbReference type="GO" id="GO:0001530">
    <property type="term" value="F:lipopolysaccharide binding"/>
    <property type="evidence" value="ECO:0007669"/>
    <property type="project" value="Ensembl"/>
</dbReference>
<dbReference type="GO" id="GO:0002039">
    <property type="term" value="F:p53 binding"/>
    <property type="evidence" value="ECO:0007669"/>
    <property type="project" value="Ensembl"/>
</dbReference>
<dbReference type="GO" id="GO:0051087">
    <property type="term" value="F:protein-folding chaperone binding"/>
    <property type="evidence" value="ECO:0000318"/>
    <property type="project" value="GO_Central"/>
</dbReference>
<dbReference type="GO" id="GO:0031625">
    <property type="term" value="F:ubiquitin protein ligase binding"/>
    <property type="evidence" value="ECO:0007669"/>
    <property type="project" value="Ensembl"/>
</dbReference>
<dbReference type="GO" id="GO:0008637">
    <property type="term" value="P:apoptotic mitochondrial changes"/>
    <property type="evidence" value="ECO:0000318"/>
    <property type="project" value="GO_Central"/>
</dbReference>
<dbReference type="GO" id="GO:0042100">
    <property type="term" value="P:B cell proliferation"/>
    <property type="evidence" value="ECO:0007669"/>
    <property type="project" value="Ensembl"/>
</dbReference>
<dbReference type="GO" id="GO:0051702">
    <property type="term" value="P:biological process involved in interaction with symbiont"/>
    <property type="evidence" value="ECO:0007669"/>
    <property type="project" value="Ensembl"/>
</dbReference>
<dbReference type="GO" id="GO:0098761">
    <property type="term" value="P:cellular response to interleukin-7"/>
    <property type="evidence" value="ECO:0007669"/>
    <property type="project" value="Ensembl"/>
</dbReference>
<dbReference type="GO" id="GO:0048291">
    <property type="term" value="P:isotype switching to IgG isotypes"/>
    <property type="evidence" value="ECO:0007669"/>
    <property type="project" value="Ensembl"/>
</dbReference>
<dbReference type="GO" id="GO:0034514">
    <property type="term" value="P:mitochondrial unfolded protein response"/>
    <property type="evidence" value="ECO:0000318"/>
    <property type="project" value="GO_Central"/>
</dbReference>
<dbReference type="GO" id="GO:0002755">
    <property type="term" value="P:MyD88-dependent toll-like receptor signaling pathway"/>
    <property type="evidence" value="ECO:0007669"/>
    <property type="project" value="Ensembl"/>
</dbReference>
<dbReference type="GO" id="GO:1900118">
    <property type="term" value="P:negative regulation of execution phase of apoptosis"/>
    <property type="evidence" value="ECO:0007669"/>
    <property type="project" value="Ensembl"/>
</dbReference>
<dbReference type="GO" id="GO:1900119">
    <property type="term" value="P:positive regulation of execution phase of apoptosis"/>
    <property type="evidence" value="ECO:0007669"/>
    <property type="project" value="Ensembl"/>
</dbReference>
<dbReference type="GO" id="GO:0032727">
    <property type="term" value="P:positive regulation of interferon-alpha production"/>
    <property type="evidence" value="ECO:0000318"/>
    <property type="project" value="GO_Central"/>
</dbReference>
<dbReference type="GO" id="GO:0032733">
    <property type="term" value="P:positive regulation of interleukin-10 production"/>
    <property type="evidence" value="ECO:0007669"/>
    <property type="project" value="Ensembl"/>
</dbReference>
<dbReference type="GO" id="GO:0032735">
    <property type="term" value="P:positive regulation of interleukin-12 production"/>
    <property type="evidence" value="ECO:0007669"/>
    <property type="project" value="Ensembl"/>
</dbReference>
<dbReference type="GO" id="GO:0032755">
    <property type="term" value="P:positive regulation of interleukin-6 production"/>
    <property type="evidence" value="ECO:0000318"/>
    <property type="project" value="GO_Central"/>
</dbReference>
<dbReference type="GO" id="GO:0043032">
    <property type="term" value="P:positive regulation of macrophage activation"/>
    <property type="evidence" value="ECO:0007669"/>
    <property type="project" value="Ensembl"/>
</dbReference>
<dbReference type="GO" id="GO:0050870">
    <property type="term" value="P:positive regulation of T cell activation"/>
    <property type="evidence" value="ECO:0000318"/>
    <property type="project" value="GO_Central"/>
</dbReference>
<dbReference type="GO" id="GO:0002842">
    <property type="term" value="P:positive regulation of T cell mediated immune response to tumor cell"/>
    <property type="evidence" value="ECO:0007669"/>
    <property type="project" value="Ensembl"/>
</dbReference>
<dbReference type="GO" id="GO:0032729">
    <property type="term" value="P:positive regulation of type II interferon production"/>
    <property type="evidence" value="ECO:0000318"/>
    <property type="project" value="GO_Central"/>
</dbReference>
<dbReference type="GO" id="GO:0006457">
    <property type="term" value="P:protein folding"/>
    <property type="evidence" value="ECO:0000318"/>
    <property type="project" value="GO_Central"/>
</dbReference>
<dbReference type="GO" id="GO:0045041">
    <property type="term" value="P:protein import into mitochondrial intermembrane space"/>
    <property type="evidence" value="ECO:0000318"/>
    <property type="project" value="GO_Central"/>
</dbReference>
<dbReference type="GO" id="GO:0042026">
    <property type="term" value="P:protein refolding"/>
    <property type="evidence" value="ECO:0007669"/>
    <property type="project" value="Ensembl"/>
</dbReference>
<dbReference type="GO" id="GO:0050821">
    <property type="term" value="P:protein stabilization"/>
    <property type="evidence" value="ECO:0007669"/>
    <property type="project" value="Ensembl"/>
</dbReference>
<dbReference type="GO" id="GO:0009409">
    <property type="term" value="P:response to cold"/>
    <property type="evidence" value="ECO:0000314"/>
    <property type="project" value="AgBase"/>
</dbReference>
<dbReference type="GO" id="GO:0042110">
    <property type="term" value="P:T cell activation"/>
    <property type="evidence" value="ECO:0000318"/>
    <property type="project" value="GO_Central"/>
</dbReference>
<dbReference type="CDD" id="cd03344">
    <property type="entry name" value="GroEL"/>
    <property type="match status" value="1"/>
</dbReference>
<dbReference type="FunFam" id="3.50.7.10:FF:000001">
    <property type="entry name" value="60 kDa chaperonin"/>
    <property type="match status" value="1"/>
</dbReference>
<dbReference type="FunFam" id="3.30.260.10:FF:000019">
    <property type="entry name" value="60 kDa heat shock mitochondrial"/>
    <property type="match status" value="1"/>
</dbReference>
<dbReference type="FunFam" id="1.10.560.10:FF:000011">
    <property type="entry name" value="60 kDa heat shock protein, mitochondrial"/>
    <property type="match status" value="1"/>
</dbReference>
<dbReference type="FunFam" id="1.10.560.10:FF:000026">
    <property type="entry name" value="Chaperonin 60 subunit alpha 2 chloroplastic"/>
    <property type="match status" value="1"/>
</dbReference>
<dbReference type="FunFam" id="3.30.260.10:FF:000018">
    <property type="entry name" value="Heat shock protein 60"/>
    <property type="match status" value="1"/>
</dbReference>
<dbReference type="Gene3D" id="3.50.7.10">
    <property type="entry name" value="GroEL"/>
    <property type="match status" value="1"/>
</dbReference>
<dbReference type="Gene3D" id="1.10.560.10">
    <property type="entry name" value="GroEL-like equatorial domain"/>
    <property type="match status" value="1"/>
</dbReference>
<dbReference type="Gene3D" id="3.30.260.10">
    <property type="entry name" value="TCP-1-like chaperonin intermediate domain"/>
    <property type="match status" value="1"/>
</dbReference>
<dbReference type="HAMAP" id="MF_00600">
    <property type="entry name" value="CH60"/>
    <property type="match status" value="1"/>
</dbReference>
<dbReference type="InterPro" id="IPR018370">
    <property type="entry name" value="Chaperonin_Cpn60_CS"/>
</dbReference>
<dbReference type="InterPro" id="IPR001844">
    <property type="entry name" value="Cpn60/GroEL"/>
</dbReference>
<dbReference type="InterPro" id="IPR002423">
    <property type="entry name" value="Cpn60/GroEL/TCP-1"/>
</dbReference>
<dbReference type="InterPro" id="IPR027409">
    <property type="entry name" value="GroEL-like_apical_dom_sf"/>
</dbReference>
<dbReference type="InterPro" id="IPR027413">
    <property type="entry name" value="GROEL-like_equatorial_sf"/>
</dbReference>
<dbReference type="InterPro" id="IPR027410">
    <property type="entry name" value="TCP-1-like_intermed_sf"/>
</dbReference>
<dbReference type="NCBIfam" id="TIGR02348">
    <property type="entry name" value="GroEL"/>
    <property type="match status" value="1"/>
</dbReference>
<dbReference type="NCBIfam" id="NF000592">
    <property type="entry name" value="PRK00013.1"/>
    <property type="match status" value="1"/>
</dbReference>
<dbReference type="NCBIfam" id="NF009487">
    <property type="entry name" value="PRK12849.1"/>
    <property type="match status" value="1"/>
</dbReference>
<dbReference type="NCBIfam" id="NF009488">
    <property type="entry name" value="PRK12850.1"/>
    <property type="match status" value="1"/>
</dbReference>
<dbReference type="NCBIfam" id="NF009489">
    <property type="entry name" value="PRK12851.1"/>
    <property type="match status" value="1"/>
</dbReference>
<dbReference type="PANTHER" id="PTHR45633">
    <property type="entry name" value="60 KDA HEAT SHOCK PROTEIN, MITOCHONDRIAL"/>
    <property type="match status" value="1"/>
</dbReference>
<dbReference type="Pfam" id="PF00118">
    <property type="entry name" value="Cpn60_TCP1"/>
    <property type="match status" value="1"/>
</dbReference>
<dbReference type="PRINTS" id="PR00298">
    <property type="entry name" value="CHAPERONIN60"/>
</dbReference>
<dbReference type="SUPFAM" id="SSF52029">
    <property type="entry name" value="GroEL apical domain-like"/>
    <property type="match status" value="1"/>
</dbReference>
<dbReference type="SUPFAM" id="SSF48592">
    <property type="entry name" value="GroEL equatorial domain-like"/>
    <property type="match status" value="1"/>
</dbReference>
<dbReference type="SUPFAM" id="SSF54849">
    <property type="entry name" value="GroEL-intermediate domain like"/>
    <property type="match status" value="1"/>
</dbReference>
<dbReference type="PROSITE" id="PS00296">
    <property type="entry name" value="CHAPERONINS_CPN60"/>
    <property type="match status" value="1"/>
</dbReference>
<feature type="transit peptide" description="Mitochondrion" evidence="1">
    <location>
        <begin position="1"/>
        <end position="26"/>
    </location>
</feature>
<feature type="chain" id="PRO_0000223500" description="60 kDa heat shock protein, mitochondrial">
    <location>
        <begin position="27"/>
        <end position="573"/>
    </location>
</feature>
<feature type="binding site" evidence="1">
    <location>
        <position position="75"/>
    </location>
    <ligand>
        <name>ATP</name>
        <dbReference type="ChEBI" id="CHEBI:30616"/>
    </ligand>
</feature>
<feature type="binding site" evidence="1">
    <location>
        <begin position="111"/>
        <end position="115"/>
    </location>
    <ligand>
        <name>ATP</name>
        <dbReference type="ChEBI" id="CHEBI:30616"/>
    </ligand>
</feature>
<feature type="binding site" evidence="1">
    <location>
        <position position="440"/>
    </location>
    <ligand>
        <name>ATP</name>
        <dbReference type="ChEBI" id="CHEBI:30616"/>
    </ligand>
</feature>
<feature type="binding site" evidence="1">
    <location>
        <position position="520"/>
    </location>
    <ligand>
        <name>ATP</name>
        <dbReference type="ChEBI" id="CHEBI:30616"/>
    </ligand>
</feature>
<feature type="modified residue" description="Phosphotyrosine" evidence="1">
    <location>
        <position position="227"/>
    </location>
</feature>
<evidence type="ECO:0000250" key="1">
    <source>
        <dbReference type="UniProtKB" id="P10809"/>
    </source>
</evidence>
<evidence type="ECO:0000255" key="2"/>
<evidence type="ECO:0000269" key="3">
    <source>
    </source>
</evidence>
<evidence type="ECO:0000305" key="4"/>
<evidence type="ECO:0000312" key="5">
    <source>
        <dbReference type="EMBL" id="CAG31521.1"/>
    </source>
</evidence>
<accession>Q5ZL72</accession>
<accession>P84165</accession>
<sequence>MLRLPAVLRQIRPVSRALAPHLTRAYAKDVKFGADARALMLQGVDLLADAVAVTMGPKGRTVIIEQSWGSPKVTKDGVTVAKAIDLKDKYKNIGAKLVQDVANNTNEEAGDGTTTATVLARAIAKEGFEKISKGANPVEIRRGVMLAVDAITAELKKLSKPVTTPEEIAQVATISANGDQEIGNIISDAMKKVGRKGVITVKDGKTLNDELEIIEGMKFDRGYISPYFINTAKGQKCEFQDAYVLISEKKISSVQSIVPALEIANSHRKPLVIIAEDVDGEALSTLVLNRLKVGLQVVAVKAPGFGDNRKNQLKDMAIATGGAVFGEEGLSLNVEDIQPHDFGKVGEVIVTKDDTMLLKGKGEKAQIEKRIQEIIEQLEVTTSEYEKEKLNERLAKLSDGVAVLKVGGTSDVEVNEKKDRVTDALNATRAAVEEGIVPGGGCALLRCIPALDALKPANEDQKIGIEIIKRTLKIPAMTIAKNAGVEGSLIVEKILQSSSEVGYDAMLGEFVNMVEKGIIDPTKVVRTALMDAAGVASLLSTAEAVVTEVPKEEKEPAMGGMGGMGGGMGGGMF</sequence>
<reference evidence="4 5" key="1">
    <citation type="journal article" date="2005" name="Genome Biol.">
        <title>Full-length cDNAs from chicken bursal lymphocytes to facilitate gene function analysis.</title>
        <authorList>
            <person name="Caldwell R.B."/>
            <person name="Kierzek A.M."/>
            <person name="Arakawa H."/>
            <person name="Bezzubov Y."/>
            <person name="Zaim J."/>
            <person name="Fiedler P."/>
            <person name="Kutter S."/>
            <person name="Blagodatski A."/>
            <person name="Kostovska D."/>
            <person name="Koter M."/>
            <person name="Plachy J."/>
            <person name="Carninci P."/>
            <person name="Hayashizaki Y."/>
            <person name="Buerstedde J.-M."/>
        </authorList>
    </citation>
    <scope>NUCLEOTIDE SEQUENCE [LARGE SCALE MRNA]</scope>
    <source>
        <strain evidence="5">CB</strain>
        <tissue evidence="5">Bursa of Fabricius</tissue>
    </source>
</reference>
<reference evidence="4" key="2">
    <citation type="journal article" date="2005" name="Proteomics">
        <title>Proteomic analysis of the Gallus gallus embryo at stage-29 of development.</title>
        <authorList>
            <person name="Agudo D."/>
            <person name="Gomez-Esquer F."/>
            <person name="Diaz-Gil G."/>
            <person name="Martinez-Arribas F."/>
            <person name="Delcan J."/>
            <person name="Schneider J."/>
            <person name="Palomar M.A."/>
            <person name="Linares R."/>
        </authorList>
    </citation>
    <scope>IDENTIFICATION</scope>
    <scope>MASS SPECTROMETRY</scope>
    <source>
        <tissue evidence="3">Embryo</tissue>
    </source>
</reference>
<organism>
    <name type="scientific">Gallus gallus</name>
    <name type="common">Chicken</name>
    <dbReference type="NCBI Taxonomy" id="9031"/>
    <lineage>
        <taxon>Eukaryota</taxon>
        <taxon>Metazoa</taxon>
        <taxon>Chordata</taxon>
        <taxon>Craniata</taxon>
        <taxon>Vertebrata</taxon>
        <taxon>Euteleostomi</taxon>
        <taxon>Archelosauria</taxon>
        <taxon>Archosauria</taxon>
        <taxon>Dinosauria</taxon>
        <taxon>Saurischia</taxon>
        <taxon>Theropoda</taxon>
        <taxon>Coelurosauria</taxon>
        <taxon>Aves</taxon>
        <taxon>Neognathae</taxon>
        <taxon>Galloanserae</taxon>
        <taxon>Galliformes</taxon>
        <taxon>Phasianidae</taxon>
        <taxon>Phasianinae</taxon>
        <taxon>Gallus</taxon>
    </lineage>
</organism>
<keyword id="KW-0067">ATP-binding</keyword>
<keyword id="KW-0143">Chaperone</keyword>
<keyword id="KW-0413">Isomerase</keyword>
<keyword id="KW-0496">Mitochondrion</keyword>
<keyword id="KW-0547">Nucleotide-binding</keyword>
<keyword id="KW-0597">Phosphoprotein</keyword>
<keyword id="KW-1185">Reference proteome</keyword>
<keyword id="KW-0809">Transit peptide</keyword>
<proteinExistence type="evidence at protein level"/>
<name>CH60_CHICK</name>